<organismHost>
    <name type="scientific">Aves</name>
    <dbReference type="NCBI Taxonomy" id="8782"/>
</organismHost>
<organismHost>
    <name type="scientific">Equus caballus</name>
    <name type="common">Horse</name>
    <dbReference type="NCBI Taxonomy" id="9796"/>
</organismHost>
<organismHost>
    <name type="scientific">Homo sapiens</name>
    <name type="common">Human</name>
    <dbReference type="NCBI Taxonomy" id="9606"/>
</organismHost>
<organismHost>
    <name type="scientific">Phocidae</name>
    <name type="common">true seals</name>
    <dbReference type="NCBI Taxonomy" id="9709"/>
</organismHost>
<organism>
    <name type="scientific">Influenza A virus (strain A/Equine/New Market/1/1977 H7N7)</name>
    <dbReference type="NCBI Taxonomy" id="217831"/>
    <lineage>
        <taxon>Viruses</taxon>
        <taxon>Riboviria</taxon>
        <taxon>Orthornavirae</taxon>
        <taxon>Negarnaviricota</taxon>
        <taxon>Polyploviricotina</taxon>
        <taxon>Insthoviricetes</taxon>
        <taxon>Articulavirales</taxon>
        <taxon>Orthomyxoviridae</taxon>
        <taxon>Alphainfluenzavirus</taxon>
        <taxon>Alphainfluenzavirus influenzae</taxon>
        <taxon>Influenza A virus</taxon>
    </lineage>
</organism>
<feature type="signal peptide" evidence="1">
    <location>
        <begin position="1"/>
        <end position="18"/>
    </location>
</feature>
<feature type="chain" id="PRO_0000440466" description="Hemagglutinin" evidence="1">
    <location>
        <begin position="19"/>
        <end position="570"/>
    </location>
</feature>
<feature type="chain" id="PRO_0000038990" description="Hemagglutinin HA1 chain" evidence="1">
    <location>
        <begin position="19"/>
        <end position="348"/>
    </location>
</feature>
<feature type="chain" id="PRO_0000038991" description="Hemagglutinin HA2 chain" evidence="1">
    <location>
        <begin position="350"/>
        <end position="570"/>
    </location>
</feature>
<feature type="topological domain" description="Extracellular" evidence="1">
    <location>
        <begin position="19"/>
        <end position="533"/>
    </location>
</feature>
<feature type="transmembrane region" description="Helical" evidence="1">
    <location>
        <begin position="534"/>
        <end position="554"/>
    </location>
</feature>
<feature type="topological domain" description="Cytoplasmic" evidence="1">
    <location>
        <begin position="555"/>
        <end position="570"/>
    </location>
</feature>
<feature type="site" description="Cleavage; by host" evidence="1">
    <location>
        <begin position="349"/>
        <end position="350"/>
    </location>
</feature>
<feature type="lipid moiety-binding region" description="S-palmitoyl cysteine; by host" evidence="1">
    <location>
        <position position="566"/>
    </location>
</feature>
<feature type="lipid moiety-binding region" description="S-palmitoyl cysteine; by host" evidence="1">
    <location>
        <position position="569"/>
    </location>
</feature>
<feature type="glycosylation site" description="N-linked (GlcNAc...) asparagine; by host" evidence="1">
    <location>
        <position position="30"/>
    </location>
</feature>
<feature type="glycosylation site" description="N-linked (GlcNAc...) asparagine; by host" evidence="1">
    <location>
        <position position="46"/>
    </location>
</feature>
<feature type="glycosylation site" description="N-linked (GlcNAc...) asparagine; by host" evidence="1">
    <location>
        <position position="249"/>
    </location>
</feature>
<feature type="glycosylation site" description="N-linked (GlcNAc...) asparagine; by host" evidence="1">
    <location>
        <position position="253"/>
    </location>
</feature>
<feature type="glycosylation site" description="N-linked (GlcNAc...) asparagine; by host" evidence="1">
    <location>
        <position position="335"/>
    </location>
</feature>
<feature type="glycosylation site" description="N-linked (GlcNAc...) asparagine; by host" evidence="1">
    <location>
        <position position="431"/>
    </location>
</feature>
<feature type="glycosylation site" description="N-linked (GlcNAc...) asparagine; by host" evidence="1">
    <location>
        <position position="503"/>
    </location>
</feature>
<feature type="disulfide bond" description="Interchain (between HA1 and HA2 chains)" evidence="1">
    <location>
        <begin position="22"/>
        <end position="486"/>
    </location>
</feature>
<feature type="disulfide bond" evidence="1">
    <location>
        <begin position="60"/>
        <end position="286"/>
    </location>
</feature>
<feature type="disulfide bond" evidence="1">
    <location>
        <begin position="72"/>
        <end position="84"/>
    </location>
</feature>
<feature type="disulfide bond" evidence="1">
    <location>
        <begin position="105"/>
        <end position="147"/>
    </location>
</feature>
<feature type="disulfide bond" evidence="1">
    <location>
        <begin position="290"/>
        <end position="314"/>
    </location>
</feature>
<feature type="disulfide bond" evidence="1">
    <location>
        <begin position="493"/>
        <end position="497"/>
    </location>
</feature>
<comment type="function">
    <text>Binds to sialic acid-containing receptors on the cell surface, bringing about the attachment of the virus particle to the cell. This attachment induces virion internalization of about two third of the virus particles through clathrin-dependent endocytosis and about one third through a clathrin- and caveolin-independent pathway. Plays a major role in the determination of host range restriction and virulence. Class I viral fusion protein. Responsible for penetration of the virus into the cell cytoplasm by mediating the fusion of the membrane of the endocytosed virus particle with the endosomal membrane. Low pH in endosomes induces an irreversible conformational change in HA2, releasing the fusion hydrophobic peptide. Several trimers are required to form a competent fusion pore.</text>
</comment>
<comment type="function">
    <text evidence="1">Binds to sialic acid-containing receptors on the cell surface, bringing about the attachment of the virus particle to the cell. This attachment induces virion internalization either through clathrin-dependent endocytosis or through clathrin- and caveolin-independent pathway. Plays a major role in the determination of host range restriction and virulence. Class I viral fusion protein. Responsible for penetration of the virus into the cell cytoplasm by mediating the fusion of the membrane of the endocytosed virus particle with the endosomal membrane. Low pH in endosomes induces an irreversible conformational change in HA2, releasing the fusion hydrophobic peptide. Several trimers are required to form a competent fusion pore.</text>
</comment>
<comment type="subunit">
    <text evidence="1">Homotrimer of disulfide-linked HA1-HA2.</text>
</comment>
<comment type="subcellular location">
    <subcellularLocation>
        <location evidence="1">Virion membrane</location>
        <topology evidence="1">Single-pass type I membrane protein</topology>
    </subcellularLocation>
    <subcellularLocation>
        <location evidence="1">Host apical cell membrane</location>
        <topology evidence="1">Single-pass type I membrane protein</topology>
    </subcellularLocation>
    <text evidence="1">Targeted to the apical plasma membrane in epithelial polarized cells through a signal present in the transmembrane domain. Associated with glycosphingolipid- and cholesterol-enriched detergent-resistant lipid rafts.</text>
</comment>
<comment type="PTM">
    <text evidence="1">Palmitoylated.</text>
</comment>
<comment type="PTM">
    <text evidence="1">In natural infection, inactive HA is matured into HA1 and HA2 outside the cell by one or more trypsin-like, arginine-specific endoprotease secreted by the bronchial epithelial cells. One identified protease that may be involved in this process is secreted in lungs by club cells.</text>
</comment>
<comment type="miscellaneous">
    <text>Major glycoprotein, comprises over 80% of the envelope proteins present in virus particle.</text>
</comment>
<comment type="miscellaneous">
    <text>The extent of infection into host organism is determined by HA. Influenza viruses bud from the apical surface of polarized epithelial cells (e.g. bronchial epithelial cells) into lumen of lungs and are therefore usually pneumotropic. The reason is that HA is cleaved by tryptase clara which is restricted to lungs. However, HAs of H5 and H7 pantropic avian viruses subtypes can be cleaved by furin and subtilisin-type enzymes, allowing the virus to grow in other organs than lungs.</text>
</comment>
<comment type="miscellaneous">
    <text evidence="2">The influenza A genome consist of 8 RNA segments. Genetic variation of hemagglutinin and/or neuraminidase genes results in the emergence of new influenza strains. The mechanism of variation can be the result of point mutations or the result of genetic reassortment between segments of two different strains.</text>
</comment>
<comment type="similarity">
    <text evidence="1">Belongs to the influenza viruses hemagglutinin family.</text>
</comment>
<gene>
    <name evidence="1" type="primary">HA</name>
</gene>
<evidence type="ECO:0000255" key="1">
    <source>
        <dbReference type="HAMAP-Rule" id="MF_04072"/>
    </source>
</evidence>
<evidence type="ECO:0000305" key="2"/>
<name>HEMA_I77A9</name>
<sequence length="570" mass="64270">MNTQILILAISAFLCVRADKICLGHHAVSNGTKVDTLTEKGIEVVNATETVEQKNIPKICSKGKQTIDLGQCGLLGTTIGPPQCDQFLEFSANLIIERREGDDICYPGKFDNEETLRQILRKSGGIKKENMGFTYTGVRTNGETSACRRSRSSFYAEMKWLLSNTDNGVFPQMTKSYKNTKKEPALIIWGIHHSGSTAEQTRLYGSGNKLITVWSSKYQQSFAPNPGPRPQMNGQSGRIDFYWLMLDPNDTVNFSFNGAFIAPDRASFLRGKSLGIQSDAQLDNNCEGECYHIGGTIISNLPFQNINSRAIGKCPRYVKQKSLMLATGMKNVPENSTHKQLTHHMRKKRGLFGAIAGFIENGWEGLIDGWYGYRHQNAQGEGTAADYKSTQSAVNQITGKLNRLIEKTNQQFELIDNEFNEIEKQIGNVINWTRDSIIEIWSYNAEFLVAVENQHTIDLTDSEMNKLYEKVRRQLRENAEEDGNGCFEIFHQCDNDCMASIRNNTYDHKKYRKEAIQNRIQIDAVKLSSGYKEIILWFSFGASCFLFLAIAMVLAFICIKNGNMRCTICI</sequence>
<accession>P26100</accession>
<protein>
    <recommendedName>
        <fullName evidence="1">Hemagglutinin</fullName>
    </recommendedName>
    <component>
        <recommendedName>
            <fullName evidence="1">Hemagglutinin HA1 chain</fullName>
        </recommendedName>
    </component>
    <component>
        <recommendedName>
            <fullName evidence="1">Hemagglutinin HA2 chain</fullName>
        </recommendedName>
    </component>
</protein>
<keyword id="KW-1167">Clathrin- and caveolin-independent endocytosis of virus by host</keyword>
<keyword id="KW-1165">Clathrin-mediated endocytosis of virus by host</keyword>
<keyword id="KW-1015">Disulfide bond</keyword>
<keyword id="KW-1170">Fusion of virus membrane with host endosomal membrane</keyword>
<keyword id="KW-1168">Fusion of virus membrane with host membrane</keyword>
<keyword id="KW-0325">Glycoprotein</keyword>
<keyword id="KW-0348">Hemagglutinin</keyword>
<keyword id="KW-1032">Host cell membrane</keyword>
<keyword id="KW-1043">Host membrane</keyword>
<keyword id="KW-0945">Host-virus interaction</keyword>
<keyword id="KW-0449">Lipoprotein</keyword>
<keyword id="KW-0472">Membrane</keyword>
<keyword id="KW-0564">Palmitate</keyword>
<keyword id="KW-0732">Signal</keyword>
<keyword id="KW-0812">Transmembrane</keyword>
<keyword id="KW-1133">Transmembrane helix</keyword>
<keyword id="KW-1161">Viral attachment to host cell</keyword>
<keyword id="KW-0261">Viral envelope protein</keyword>
<keyword id="KW-1162">Viral penetration into host cytoplasm</keyword>
<keyword id="KW-0946">Virion</keyword>
<keyword id="KW-1164">Virus endocytosis by host</keyword>
<keyword id="KW-1160">Virus entry into host cell</keyword>
<proteinExistence type="inferred from homology"/>
<reference key="1">
    <citation type="journal article" date="1992" name="Virus Res.">
        <title>Sequence analysis of the equine H7 influenza virus haemagglutinin gene.</title>
        <authorList>
            <person name="Gibson C.A."/>
            <person name="Daniels R.S."/>
            <person name="Oxford J.S."/>
            <person name="McCauley J.W."/>
        </authorList>
    </citation>
    <scope>NUCLEOTIDE SEQUENCE [GENOMIC RNA]</scope>
</reference>
<dbReference type="EMBL" id="X62554">
    <property type="protein sequence ID" value="CAA44431.1"/>
    <property type="molecule type" value="Genomic_RNA"/>
</dbReference>
<dbReference type="PIR" id="S22018">
    <property type="entry name" value="S22018"/>
</dbReference>
<dbReference type="SMR" id="P26100"/>
<dbReference type="GlyCosmos" id="P26100">
    <property type="glycosylation" value="7 sites, No reported glycans"/>
</dbReference>
<dbReference type="GO" id="GO:0020002">
    <property type="term" value="C:host cell plasma membrane"/>
    <property type="evidence" value="ECO:0007669"/>
    <property type="project" value="UniProtKB-SubCell"/>
</dbReference>
<dbReference type="GO" id="GO:0016020">
    <property type="term" value="C:membrane"/>
    <property type="evidence" value="ECO:0007669"/>
    <property type="project" value="UniProtKB-UniRule"/>
</dbReference>
<dbReference type="GO" id="GO:0019031">
    <property type="term" value="C:viral envelope"/>
    <property type="evidence" value="ECO:0007669"/>
    <property type="project" value="UniProtKB-UniRule"/>
</dbReference>
<dbReference type="GO" id="GO:0055036">
    <property type="term" value="C:virion membrane"/>
    <property type="evidence" value="ECO:0007669"/>
    <property type="project" value="UniProtKB-SubCell"/>
</dbReference>
<dbReference type="GO" id="GO:0046789">
    <property type="term" value="F:host cell surface receptor binding"/>
    <property type="evidence" value="ECO:0007669"/>
    <property type="project" value="UniProtKB-UniRule"/>
</dbReference>
<dbReference type="GO" id="GO:0075512">
    <property type="term" value="P:clathrin-dependent endocytosis of virus by host cell"/>
    <property type="evidence" value="ECO:0007669"/>
    <property type="project" value="UniProtKB-UniRule"/>
</dbReference>
<dbReference type="GO" id="GO:0039654">
    <property type="term" value="P:fusion of virus membrane with host endosome membrane"/>
    <property type="evidence" value="ECO:0007669"/>
    <property type="project" value="UniProtKB-UniRule"/>
</dbReference>
<dbReference type="GO" id="GO:0019064">
    <property type="term" value="P:fusion of virus membrane with host plasma membrane"/>
    <property type="evidence" value="ECO:0007669"/>
    <property type="project" value="InterPro"/>
</dbReference>
<dbReference type="GO" id="GO:0046761">
    <property type="term" value="P:viral budding from plasma membrane"/>
    <property type="evidence" value="ECO:0007669"/>
    <property type="project" value="UniProtKB-UniRule"/>
</dbReference>
<dbReference type="GO" id="GO:0019062">
    <property type="term" value="P:virion attachment to host cell"/>
    <property type="evidence" value="ECO:0007669"/>
    <property type="project" value="UniProtKB-KW"/>
</dbReference>
<dbReference type="Gene3D" id="3.90.20.10">
    <property type="match status" value="1"/>
</dbReference>
<dbReference type="Gene3D" id="3.90.209.20">
    <property type="match status" value="1"/>
</dbReference>
<dbReference type="HAMAP" id="MF_04072">
    <property type="entry name" value="INFV_HEMA"/>
    <property type="match status" value="1"/>
</dbReference>
<dbReference type="InterPro" id="IPR008980">
    <property type="entry name" value="Capsid_hemagglutn"/>
</dbReference>
<dbReference type="InterPro" id="IPR013828">
    <property type="entry name" value="Hemagglutn_HA1_a/b_dom_sf"/>
</dbReference>
<dbReference type="InterPro" id="IPR000149">
    <property type="entry name" value="Hemagglutn_influenz_A"/>
</dbReference>
<dbReference type="InterPro" id="IPR001364">
    <property type="entry name" value="Hemagglutn_influenz_A/B"/>
</dbReference>
<dbReference type="Pfam" id="PF00509">
    <property type="entry name" value="Hemagglutinin"/>
    <property type="match status" value="1"/>
</dbReference>
<dbReference type="PRINTS" id="PR00330">
    <property type="entry name" value="HEMAGGLUTN1"/>
</dbReference>
<dbReference type="PRINTS" id="PR00329">
    <property type="entry name" value="HEMAGGLUTN12"/>
</dbReference>
<dbReference type="SUPFAM" id="SSF58064">
    <property type="entry name" value="Influenza hemagglutinin (stalk)"/>
    <property type="match status" value="1"/>
</dbReference>
<dbReference type="SUPFAM" id="SSF49818">
    <property type="entry name" value="Viral protein domain"/>
    <property type="match status" value="1"/>
</dbReference>